<feature type="chain" id="PRO_0000082196" description="Taste receptor type 2 member 3">
    <location>
        <begin position="1"/>
        <end position="315"/>
    </location>
</feature>
<feature type="topological domain" description="Extracellular" evidence="2">
    <location>
        <begin position="1"/>
        <end position="5"/>
    </location>
</feature>
<feature type="transmembrane region" description="Helical; Name=1" evidence="2">
    <location>
        <begin position="6"/>
        <end position="26"/>
    </location>
</feature>
<feature type="topological domain" description="Cytoplasmic" evidence="2">
    <location>
        <begin position="27"/>
        <end position="41"/>
    </location>
</feature>
<feature type="transmembrane region" description="Helical; Name=2" evidence="2">
    <location>
        <begin position="42"/>
        <end position="62"/>
    </location>
</feature>
<feature type="topological domain" description="Extracellular" evidence="2">
    <location>
        <begin position="63"/>
        <end position="93"/>
    </location>
</feature>
<feature type="transmembrane region" description="Helical; Name=3" evidence="2">
    <location>
        <begin position="94"/>
        <end position="114"/>
    </location>
</feature>
<feature type="topological domain" description="Cytoplasmic" evidence="2">
    <location>
        <begin position="115"/>
        <end position="127"/>
    </location>
</feature>
<feature type="transmembrane region" description="Helical; Name=4" evidence="2">
    <location>
        <begin position="128"/>
        <end position="148"/>
    </location>
</feature>
<feature type="topological domain" description="Extracellular" evidence="2">
    <location>
        <begin position="149"/>
        <end position="185"/>
    </location>
</feature>
<feature type="transmembrane region" description="Helical; Name=5" evidence="2">
    <location>
        <begin position="186"/>
        <end position="206"/>
    </location>
</feature>
<feature type="topological domain" description="Cytoplasmic" evidence="2">
    <location>
        <begin position="207"/>
        <end position="233"/>
    </location>
</feature>
<feature type="transmembrane region" description="Helical; Name=6" evidence="2">
    <location>
        <begin position="234"/>
        <end position="254"/>
    </location>
</feature>
<feature type="topological domain" description="Extracellular" evidence="2">
    <location>
        <begin position="255"/>
        <end position="265"/>
    </location>
</feature>
<feature type="transmembrane region" description="Helical; Name=7" evidence="2">
    <location>
        <begin position="266"/>
        <end position="286"/>
    </location>
</feature>
<feature type="topological domain" description="Cytoplasmic" evidence="2">
    <location>
        <begin position="287"/>
        <end position="315"/>
    </location>
</feature>
<feature type="glycosylation site" description="N-linked (GlcNAc...) asparagine" evidence="2">
    <location>
        <position position="165"/>
    </location>
</feature>
<accession>Q645Y5</accession>
<evidence type="ECO:0000250" key="1"/>
<evidence type="ECO:0000255" key="2"/>
<evidence type="ECO:0000305" key="3"/>
<keyword id="KW-0297">G-protein coupled receptor</keyword>
<keyword id="KW-0325">Glycoprotein</keyword>
<keyword id="KW-0472">Membrane</keyword>
<keyword id="KW-0675">Receptor</keyword>
<keyword id="KW-1185">Reference proteome</keyword>
<keyword id="KW-0716">Sensory transduction</keyword>
<keyword id="KW-0919">Taste</keyword>
<keyword id="KW-0807">Transducer</keyword>
<keyword id="KW-0812">Transmembrane</keyword>
<keyword id="KW-1133">Transmembrane helix</keyword>
<reference key="1">
    <citation type="journal article" date="2005" name="Mol. Biol. Evol.">
        <title>Evolution of bitter taste receptors in humans and apes.</title>
        <authorList>
            <person name="Fischer A."/>
            <person name="Gilad Y."/>
            <person name="Man O."/>
            <person name="Paeaebo S."/>
        </authorList>
    </citation>
    <scope>NUCLEOTIDE SEQUENCE [GENOMIC DNA]</scope>
</reference>
<organism>
    <name type="scientific">Gorilla gorilla gorilla</name>
    <name type="common">Western lowland gorilla</name>
    <dbReference type="NCBI Taxonomy" id="9595"/>
    <lineage>
        <taxon>Eukaryota</taxon>
        <taxon>Metazoa</taxon>
        <taxon>Chordata</taxon>
        <taxon>Craniata</taxon>
        <taxon>Vertebrata</taxon>
        <taxon>Euteleostomi</taxon>
        <taxon>Mammalia</taxon>
        <taxon>Eutheria</taxon>
        <taxon>Euarchontoglires</taxon>
        <taxon>Primates</taxon>
        <taxon>Haplorrhini</taxon>
        <taxon>Catarrhini</taxon>
        <taxon>Hominidae</taxon>
        <taxon>Gorilla</taxon>
    </lineage>
</organism>
<proteinExistence type="inferred from homology"/>
<sequence>MGLTEGVFLILSGTQFTLGILVNCFIELVNGSSWFKTKRMSLSDFIITTLALLRIILLCIILTDSFLIEFSPNTHDSGIIMQIIDVSWTFTNHLSIWLATCLGVLYCLKIASFSHPTFLWLKWRVSRVMVWMLLGALLLSCGSTASLINEFKLYSVFRGIEATRNVTEHFRKKRSEYYLIHVLGTLWYLPPLIVSLASYSLLIFSLGRHTRQMLQNGTSSRDPTTEAHKRAIRIILSFFFLFLLYFLAFLIASFGNFLPKTKMAKMIGEVMTMFYPAGHSFILILGNSKLKQTFVVMLRCESGHLKPGSKGPIFS</sequence>
<name>TA2R3_GORGO</name>
<protein>
    <recommendedName>
        <fullName>Taste receptor type 2 member 3</fullName>
        <shortName>T2R3</shortName>
    </recommendedName>
</protein>
<dbReference type="EMBL" id="AY724928">
    <property type="protein sequence ID" value="AAU21134.1"/>
    <property type="molecule type" value="Genomic_DNA"/>
</dbReference>
<dbReference type="RefSeq" id="XP_004046388.1">
    <property type="nucleotide sequence ID" value="XM_004046340.2"/>
</dbReference>
<dbReference type="RefSeq" id="XP_055202408.1">
    <property type="nucleotide sequence ID" value="XM_055346433.2"/>
</dbReference>
<dbReference type="SMR" id="Q645Y5"/>
<dbReference type="FunCoup" id="Q645Y5">
    <property type="interactions" value="228"/>
</dbReference>
<dbReference type="STRING" id="9593.ENSGGOP00000009392"/>
<dbReference type="GlyCosmos" id="Q645Y5">
    <property type="glycosylation" value="1 site, No reported glycans"/>
</dbReference>
<dbReference type="GeneID" id="101152174"/>
<dbReference type="eggNOG" id="ENOG502SKRK">
    <property type="taxonomic scope" value="Eukaryota"/>
</dbReference>
<dbReference type="HOGENOM" id="CLU_072337_3_0_1"/>
<dbReference type="InParanoid" id="Q645Y5"/>
<dbReference type="OMA" id="IDIFWTF"/>
<dbReference type="Proteomes" id="UP000001519">
    <property type="component" value="Unplaced"/>
</dbReference>
<dbReference type="GO" id="GO:0016020">
    <property type="term" value="C:membrane"/>
    <property type="evidence" value="ECO:0000318"/>
    <property type="project" value="GO_Central"/>
</dbReference>
<dbReference type="GO" id="GO:0005886">
    <property type="term" value="C:plasma membrane"/>
    <property type="evidence" value="ECO:0007669"/>
    <property type="project" value="UniProtKB-ARBA"/>
</dbReference>
<dbReference type="GO" id="GO:0033038">
    <property type="term" value="F:bitter taste receptor activity"/>
    <property type="evidence" value="ECO:0000318"/>
    <property type="project" value="GO_Central"/>
</dbReference>
<dbReference type="GO" id="GO:0004930">
    <property type="term" value="F:G protein-coupled receptor activity"/>
    <property type="evidence" value="ECO:0007669"/>
    <property type="project" value="UniProtKB-KW"/>
</dbReference>
<dbReference type="GO" id="GO:0001580">
    <property type="term" value="P:detection of chemical stimulus involved in sensory perception of bitter taste"/>
    <property type="evidence" value="ECO:0000318"/>
    <property type="project" value="GO_Central"/>
</dbReference>
<dbReference type="CDD" id="cd15020">
    <property type="entry name" value="7tm_TAS2R3"/>
    <property type="match status" value="1"/>
</dbReference>
<dbReference type="FunFam" id="1.20.1070.10:FF:000042">
    <property type="entry name" value="Taste receptor type 2 member 7"/>
    <property type="match status" value="1"/>
</dbReference>
<dbReference type="Gene3D" id="1.20.1070.10">
    <property type="entry name" value="Rhodopsin 7-helix transmembrane proteins"/>
    <property type="match status" value="1"/>
</dbReference>
<dbReference type="InterPro" id="IPR007960">
    <property type="entry name" value="TAS2R"/>
</dbReference>
<dbReference type="PANTHER" id="PTHR11394">
    <property type="entry name" value="TASTE RECEPTOR TYPE 2"/>
    <property type="match status" value="1"/>
</dbReference>
<dbReference type="PANTHER" id="PTHR11394:SF49">
    <property type="entry name" value="TASTE RECEPTOR TYPE 2 MEMBER 3"/>
    <property type="match status" value="1"/>
</dbReference>
<dbReference type="Pfam" id="PF05296">
    <property type="entry name" value="TAS2R"/>
    <property type="match status" value="1"/>
</dbReference>
<dbReference type="SUPFAM" id="SSF81321">
    <property type="entry name" value="Family A G protein-coupled receptor-like"/>
    <property type="match status" value="1"/>
</dbReference>
<gene>
    <name type="primary">TAS2R3</name>
</gene>
<comment type="function">
    <text evidence="1">Gustducin-coupled receptor implicated in the perception of bitter compounds in the oral cavity and the gastrointestinal tract. Signals through PLCB2 and the calcium-regulated cation channel TRPM5 (By similarity).</text>
</comment>
<comment type="subcellular location">
    <subcellularLocation>
        <location>Membrane</location>
        <topology>Multi-pass membrane protein</topology>
    </subcellularLocation>
</comment>
<comment type="miscellaneous">
    <text>Several bitter taste receptors are expressed in a single taste receptor cell.</text>
</comment>
<comment type="similarity">
    <text evidence="3">Belongs to the G-protein coupled receptor T2R family.</text>
</comment>